<comment type="function">
    <text evidence="1">Catalyzes the formation of 5-methyl-uridine at position 747 (m5U747) in 23S rRNA.</text>
</comment>
<comment type="catalytic activity">
    <reaction evidence="1">
        <text>uridine(747) in 23S rRNA + S-adenosyl-L-methionine = 5-methyluridine(747) in 23S rRNA + S-adenosyl-L-homocysteine + H(+)</text>
        <dbReference type="Rhea" id="RHEA:42628"/>
        <dbReference type="Rhea" id="RHEA-COMP:10154"/>
        <dbReference type="Rhea" id="RHEA-COMP:10155"/>
        <dbReference type="ChEBI" id="CHEBI:15378"/>
        <dbReference type="ChEBI" id="CHEBI:57856"/>
        <dbReference type="ChEBI" id="CHEBI:59789"/>
        <dbReference type="ChEBI" id="CHEBI:65315"/>
        <dbReference type="ChEBI" id="CHEBI:74447"/>
        <dbReference type="EC" id="2.1.1.189"/>
    </reaction>
</comment>
<comment type="similarity">
    <text evidence="1">Belongs to the class I-like SAM-binding methyltransferase superfamily. RNA M5U methyltransferase family. RlmC subfamily.</text>
</comment>
<gene>
    <name evidence="1" type="primary">rlmC</name>
    <name type="synonym">rumB</name>
    <name type="ordered locus">UTI89_C0862</name>
</gene>
<accession>Q1RE66</accession>
<keyword id="KW-0004">4Fe-4S</keyword>
<keyword id="KW-0408">Iron</keyword>
<keyword id="KW-0411">Iron-sulfur</keyword>
<keyword id="KW-0479">Metal-binding</keyword>
<keyword id="KW-0489">Methyltransferase</keyword>
<keyword id="KW-0698">rRNA processing</keyword>
<keyword id="KW-0949">S-adenosyl-L-methionine</keyword>
<keyword id="KW-0808">Transferase</keyword>
<name>RLMC_ECOUT</name>
<proteinExistence type="inferred from homology"/>
<evidence type="ECO:0000255" key="1">
    <source>
        <dbReference type="HAMAP-Rule" id="MF_01012"/>
    </source>
</evidence>
<sequence>MQCALYDAGRCRSCQWITQPIPEQLSAKTVDLKNLLADFPVEEWCAPVSGPEQGFRNKAKMVVSGSVEKPLLGMLHRDGTPEDLCDCPLYPASFAPVFAALKPFIARAGLTPYNVARKRGELKYILLTESQSDGGMMLRFVLRSDTKLAQLRKALPWLQEQLPQLKVITVNIQPVHMAIMEGETEIYLTEQQALAERFNDVPLWIRPQSFFQTNPAVASQLYATARDWVRQLPVKHMWDLFCGVGGFGLHCATPDMQLTGIEIAPEAIACAKQSAAELGLTRLQFQALDSTQFATAQGEVPELVLVNPPRRGIGKPLCDYLSTMAPRFIIYSSCNAQTMAKDIRELPGYRIERVQLFDMFPHTAHYEVLTLLVKQ</sequence>
<protein>
    <recommendedName>
        <fullName evidence="1">23S rRNA (uracil(747)-C(5))-methyltransferase RlmC</fullName>
        <ecNumber evidence="1">2.1.1.189</ecNumber>
    </recommendedName>
    <alternativeName>
        <fullName evidence="1">23S rRNA(m5U747)-methyltransferase</fullName>
    </alternativeName>
</protein>
<dbReference type="EC" id="2.1.1.189" evidence="1"/>
<dbReference type="EMBL" id="CP000243">
    <property type="protein sequence ID" value="ABE06348.1"/>
    <property type="molecule type" value="Genomic_DNA"/>
</dbReference>
<dbReference type="RefSeq" id="WP_001149763.1">
    <property type="nucleotide sequence ID" value="NZ_CP064825.1"/>
</dbReference>
<dbReference type="SMR" id="Q1RE66"/>
<dbReference type="KEGG" id="eci:UTI89_C0862"/>
<dbReference type="HOGENOM" id="CLU_014689_0_0_6"/>
<dbReference type="Proteomes" id="UP000001952">
    <property type="component" value="Chromosome"/>
</dbReference>
<dbReference type="GO" id="GO:0051539">
    <property type="term" value="F:4 iron, 4 sulfur cluster binding"/>
    <property type="evidence" value="ECO:0007669"/>
    <property type="project" value="UniProtKB-KW"/>
</dbReference>
<dbReference type="GO" id="GO:0005506">
    <property type="term" value="F:iron ion binding"/>
    <property type="evidence" value="ECO:0007669"/>
    <property type="project" value="UniProtKB-UniRule"/>
</dbReference>
<dbReference type="GO" id="GO:0070041">
    <property type="term" value="F:rRNA (uridine-C5-)-methyltransferase activity"/>
    <property type="evidence" value="ECO:0007669"/>
    <property type="project" value="UniProtKB-UniRule"/>
</dbReference>
<dbReference type="GO" id="GO:0070475">
    <property type="term" value="P:rRNA base methylation"/>
    <property type="evidence" value="ECO:0007669"/>
    <property type="project" value="TreeGrafter"/>
</dbReference>
<dbReference type="CDD" id="cd02440">
    <property type="entry name" value="AdoMet_MTases"/>
    <property type="match status" value="1"/>
</dbReference>
<dbReference type="FunFam" id="2.40.50.1070:FF:000002">
    <property type="entry name" value="23S rRNA (uracil(747)-C(5))-methyltransferase RlmC"/>
    <property type="match status" value="1"/>
</dbReference>
<dbReference type="FunFam" id="3.40.50.150:FF:000049">
    <property type="entry name" value="23S rRNA (uracil(747)-C(5))-methyltransferase RlmC"/>
    <property type="match status" value="1"/>
</dbReference>
<dbReference type="Gene3D" id="2.40.50.1070">
    <property type="match status" value="1"/>
</dbReference>
<dbReference type="Gene3D" id="3.40.50.150">
    <property type="entry name" value="Vaccinia Virus protein VP39"/>
    <property type="match status" value="1"/>
</dbReference>
<dbReference type="HAMAP" id="MF_01012">
    <property type="entry name" value="23SrRNA_methyltr_RlmC"/>
    <property type="match status" value="1"/>
</dbReference>
<dbReference type="InterPro" id="IPR011825">
    <property type="entry name" value="23SrRNA_MeTrfase_RlmC"/>
</dbReference>
<dbReference type="InterPro" id="IPR030390">
    <property type="entry name" value="MeTrfase_TrmA_AS"/>
</dbReference>
<dbReference type="InterPro" id="IPR030391">
    <property type="entry name" value="MeTrfase_TrmA_CS"/>
</dbReference>
<dbReference type="InterPro" id="IPR029063">
    <property type="entry name" value="SAM-dependent_MTases_sf"/>
</dbReference>
<dbReference type="InterPro" id="IPR010280">
    <property type="entry name" value="U5_MeTrfase_fam"/>
</dbReference>
<dbReference type="NCBIfam" id="TIGR02085">
    <property type="entry name" value="meth_trns_rumB"/>
    <property type="match status" value="1"/>
</dbReference>
<dbReference type="PANTHER" id="PTHR11061">
    <property type="entry name" value="RNA M5U METHYLTRANSFERASE"/>
    <property type="match status" value="1"/>
</dbReference>
<dbReference type="PANTHER" id="PTHR11061:SF30">
    <property type="entry name" value="TRNA (URACIL(54)-C(5))-METHYLTRANSFERASE"/>
    <property type="match status" value="1"/>
</dbReference>
<dbReference type="Pfam" id="PF05958">
    <property type="entry name" value="tRNA_U5-meth_tr"/>
    <property type="match status" value="1"/>
</dbReference>
<dbReference type="SUPFAM" id="SSF53335">
    <property type="entry name" value="S-adenosyl-L-methionine-dependent methyltransferases"/>
    <property type="match status" value="1"/>
</dbReference>
<dbReference type="PROSITE" id="PS51687">
    <property type="entry name" value="SAM_MT_RNA_M5U"/>
    <property type="match status" value="1"/>
</dbReference>
<dbReference type="PROSITE" id="PS01230">
    <property type="entry name" value="TRMA_1"/>
    <property type="match status" value="1"/>
</dbReference>
<dbReference type="PROSITE" id="PS01231">
    <property type="entry name" value="TRMA_2"/>
    <property type="match status" value="1"/>
</dbReference>
<reference key="1">
    <citation type="journal article" date="2006" name="Proc. Natl. Acad. Sci. U.S.A.">
        <title>Identification of genes subject to positive selection in uropathogenic strains of Escherichia coli: a comparative genomics approach.</title>
        <authorList>
            <person name="Chen S.L."/>
            <person name="Hung C.-S."/>
            <person name="Xu J."/>
            <person name="Reigstad C.S."/>
            <person name="Magrini V."/>
            <person name="Sabo A."/>
            <person name="Blasiar D."/>
            <person name="Bieri T."/>
            <person name="Meyer R.R."/>
            <person name="Ozersky P."/>
            <person name="Armstrong J.R."/>
            <person name="Fulton R.S."/>
            <person name="Latreille J.P."/>
            <person name="Spieth J."/>
            <person name="Hooton T.M."/>
            <person name="Mardis E.R."/>
            <person name="Hultgren S.J."/>
            <person name="Gordon J.I."/>
        </authorList>
    </citation>
    <scope>NUCLEOTIDE SEQUENCE [LARGE SCALE GENOMIC DNA]</scope>
    <source>
        <strain>UTI89 / UPEC</strain>
    </source>
</reference>
<organism>
    <name type="scientific">Escherichia coli (strain UTI89 / UPEC)</name>
    <dbReference type="NCBI Taxonomy" id="364106"/>
    <lineage>
        <taxon>Bacteria</taxon>
        <taxon>Pseudomonadati</taxon>
        <taxon>Pseudomonadota</taxon>
        <taxon>Gammaproteobacteria</taxon>
        <taxon>Enterobacterales</taxon>
        <taxon>Enterobacteriaceae</taxon>
        <taxon>Escherichia</taxon>
    </lineage>
</organism>
<feature type="chain" id="PRO_0000282006" description="23S rRNA (uracil(747)-C(5))-methyltransferase RlmC">
    <location>
        <begin position="1"/>
        <end position="375"/>
    </location>
</feature>
<feature type="active site" description="Nucleophile" evidence="1">
    <location>
        <position position="334"/>
    </location>
</feature>
<feature type="binding site" evidence="1">
    <location>
        <position position="3"/>
    </location>
    <ligand>
        <name>[4Fe-4S] cluster</name>
        <dbReference type="ChEBI" id="CHEBI:49883"/>
    </ligand>
</feature>
<feature type="binding site" evidence="1">
    <location>
        <position position="11"/>
    </location>
    <ligand>
        <name>[4Fe-4S] cluster</name>
        <dbReference type="ChEBI" id="CHEBI:49883"/>
    </ligand>
</feature>
<feature type="binding site" evidence="1">
    <location>
        <position position="14"/>
    </location>
    <ligand>
        <name>[4Fe-4S] cluster</name>
        <dbReference type="ChEBI" id="CHEBI:49883"/>
    </ligand>
</feature>
<feature type="binding site" evidence="1">
    <location>
        <position position="87"/>
    </location>
    <ligand>
        <name>[4Fe-4S] cluster</name>
        <dbReference type="ChEBI" id="CHEBI:49883"/>
    </ligand>
</feature>
<feature type="binding site" evidence="1">
    <location>
        <position position="212"/>
    </location>
    <ligand>
        <name>S-adenosyl-L-methionine</name>
        <dbReference type="ChEBI" id="CHEBI:59789"/>
    </ligand>
</feature>
<feature type="binding site" evidence="1">
    <location>
        <position position="241"/>
    </location>
    <ligand>
        <name>S-adenosyl-L-methionine</name>
        <dbReference type="ChEBI" id="CHEBI:59789"/>
    </ligand>
</feature>
<feature type="binding site" evidence="1">
    <location>
        <position position="262"/>
    </location>
    <ligand>
        <name>S-adenosyl-L-methionine</name>
        <dbReference type="ChEBI" id="CHEBI:59789"/>
    </ligand>
</feature>
<feature type="binding site" evidence="1">
    <location>
        <position position="307"/>
    </location>
    <ligand>
        <name>S-adenosyl-L-methionine</name>
        <dbReference type="ChEBI" id="CHEBI:59789"/>
    </ligand>
</feature>